<accession>A9AFZ7</accession>
<protein>
    <recommendedName>
        <fullName evidence="1">NADH-quinone oxidoreductase subunit K</fullName>
        <ecNumber evidence="1">7.1.1.-</ecNumber>
    </recommendedName>
    <alternativeName>
        <fullName evidence="1">NADH dehydrogenase I subunit K</fullName>
    </alternativeName>
    <alternativeName>
        <fullName evidence="1">NDH-1 subunit K</fullName>
    </alternativeName>
</protein>
<feature type="chain" id="PRO_0000389992" description="NADH-quinone oxidoreductase subunit K">
    <location>
        <begin position="1"/>
        <end position="101"/>
    </location>
</feature>
<feature type="transmembrane region" description="Helical" evidence="1">
    <location>
        <begin position="4"/>
        <end position="24"/>
    </location>
</feature>
<feature type="transmembrane region" description="Helical" evidence="1">
    <location>
        <begin position="29"/>
        <end position="49"/>
    </location>
</feature>
<feature type="transmembrane region" description="Helical" evidence="1">
    <location>
        <begin position="61"/>
        <end position="81"/>
    </location>
</feature>
<comment type="function">
    <text evidence="1">NDH-1 shuttles electrons from NADH, via FMN and iron-sulfur (Fe-S) centers, to quinones in the respiratory chain. The immediate electron acceptor for the enzyme in this species is believed to be ubiquinone. Couples the redox reaction to proton translocation (for every two electrons transferred, four hydrogen ions are translocated across the cytoplasmic membrane), and thus conserves the redox energy in a proton gradient.</text>
</comment>
<comment type="catalytic activity">
    <reaction evidence="1">
        <text>a quinone + NADH + 5 H(+)(in) = a quinol + NAD(+) + 4 H(+)(out)</text>
        <dbReference type="Rhea" id="RHEA:57888"/>
        <dbReference type="ChEBI" id="CHEBI:15378"/>
        <dbReference type="ChEBI" id="CHEBI:24646"/>
        <dbReference type="ChEBI" id="CHEBI:57540"/>
        <dbReference type="ChEBI" id="CHEBI:57945"/>
        <dbReference type="ChEBI" id="CHEBI:132124"/>
    </reaction>
</comment>
<comment type="subunit">
    <text evidence="1">NDH-1 is composed of 14 different subunits. Subunits NuoA, H, J, K, L, M, N constitute the membrane sector of the complex.</text>
</comment>
<comment type="subcellular location">
    <subcellularLocation>
        <location evidence="1">Cell inner membrane</location>
        <topology evidence="1">Multi-pass membrane protein</topology>
    </subcellularLocation>
</comment>
<comment type="similarity">
    <text evidence="1">Belongs to the complex I subunit 4L family.</text>
</comment>
<gene>
    <name evidence="1" type="primary">nuoK</name>
    <name type="ordered locus">Bmul_1038</name>
    <name type="ordered locus">BMULJ_02225</name>
</gene>
<sequence length="101" mass="11084">MLTLAHYLVLGAILFAIAIVGIFLNRRNIIIILMAIELMLLAVNTNFVAFSHYLGDVHGQIFVFFVLTVAAAEAAIGLAILVTLFRKLDTINVEDLDQLKG</sequence>
<organism>
    <name type="scientific">Burkholderia multivorans (strain ATCC 17616 / 249)</name>
    <dbReference type="NCBI Taxonomy" id="395019"/>
    <lineage>
        <taxon>Bacteria</taxon>
        <taxon>Pseudomonadati</taxon>
        <taxon>Pseudomonadota</taxon>
        <taxon>Betaproteobacteria</taxon>
        <taxon>Burkholderiales</taxon>
        <taxon>Burkholderiaceae</taxon>
        <taxon>Burkholderia</taxon>
        <taxon>Burkholderia cepacia complex</taxon>
    </lineage>
</organism>
<keyword id="KW-0997">Cell inner membrane</keyword>
<keyword id="KW-1003">Cell membrane</keyword>
<keyword id="KW-0472">Membrane</keyword>
<keyword id="KW-0520">NAD</keyword>
<keyword id="KW-0874">Quinone</keyword>
<keyword id="KW-1185">Reference proteome</keyword>
<keyword id="KW-1278">Translocase</keyword>
<keyword id="KW-0812">Transmembrane</keyword>
<keyword id="KW-1133">Transmembrane helix</keyword>
<keyword id="KW-0813">Transport</keyword>
<keyword id="KW-0830">Ubiquinone</keyword>
<reference key="1">
    <citation type="submission" date="2007-10" db="EMBL/GenBank/DDBJ databases">
        <title>Complete sequence of chromosome 1 of Burkholderia multivorans ATCC 17616.</title>
        <authorList>
            <person name="Copeland A."/>
            <person name="Lucas S."/>
            <person name="Lapidus A."/>
            <person name="Barry K."/>
            <person name="Glavina del Rio T."/>
            <person name="Dalin E."/>
            <person name="Tice H."/>
            <person name="Pitluck S."/>
            <person name="Chain P."/>
            <person name="Malfatti S."/>
            <person name="Shin M."/>
            <person name="Vergez L."/>
            <person name="Schmutz J."/>
            <person name="Larimer F."/>
            <person name="Land M."/>
            <person name="Hauser L."/>
            <person name="Kyrpides N."/>
            <person name="Kim E."/>
            <person name="Tiedje J."/>
            <person name="Richardson P."/>
        </authorList>
    </citation>
    <scope>NUCLEOTIDE SEQUENCE [LARGE SCALE GENOMIC DNA]</scope>
    <source>
        <strain>ATCC 17616 / 249</strain>
    </source>
</reference>
<reference key="2">
    <citation type="submission" date="2007-04" db="EMBL/GenBank/DDBJ databases">
        <title>Complete genome sequence of Burkholderia multivorans ATCC 17616.</title>
        <authorList>
            <person name="Ohtsubo Y."/>
            <person name="Yamashita A."/>
            <person name="Kurokawa K."/>
            <person name="Takami H."/>
            <person name="Yuhara S."/>
            <person name="Nishiyama E."/>
            <person name="Endo R."/>
            <person name="Miyazaki R."/>
            <person name="Ono A."/>
            <person name="Yano K."/>
            <person name="Ito M."/>
            <person name="Sota M."/>
            <person name="Yuji N."/>
            <person name="Hattori M."/>
            <person name="Tsuda M."/>
        </authorList>
    </citation>
    <scope>NUCLEOTIDE SEQUENCE [LARGE SCALE GENOMIC DNA]</scope>
    <source>
        <strain>ATCC 17616 / 249</strain>
    </source>
</reference>
<proteinExistence type="inferred from homology"/>
<dbReference type="EC" id="7.1.1.-" evidence="1"/>
<dbReference type="EMBL" id="CP000868">
    <property type="protein sequence ID" value="ABX14729.1"/>
    <property type="molecule type" value="Genomic_DNA"/>
</dbReference>
<dbReference type="EMBL" id="AP009385">
    <property type="protein sequence ID" value="BAG44121.1"/>
    <property type="molecule type" value="Genomic_DNA"/>
</dbReference>
<dbReference type="RefSeq" id="WP_004185739.1">
    <property type="nucleotide sequence ID" value="NC_010804.1"/>
</dbReference>
<dbReference type="SMR" id="A9AFZ7"/>
<dbReference type="STRING" id="395019.BMULJ_02225"/>
<dbReference type="GeneID" id="98107315"/>
<dbReference type="KEGG" id="bmj:BMULJ_02225"/>
<dbReference type="KEGG" id="bmu:Bmul_1038"/>
<dbReference type="eggNOG" id="COG0713">
    <property type="taxonomic scope" value="Bacteria"/>
</dbReference>
<dbReference type="HOGENOM" id="CLU_144724_2_0_4"/>
<dbReference type="Proteomes" id="UP000008815">
    <property type="component" value="Chromosome 1"/>
</dbReference>
<dbReference type="GO" id="GO:0030964">
    <property type="term" value="C:NADH dehydrogenase complex"/>
    <property type="evidence" value="ECO:0007669"/>
    <property type="project" value="TreeGrafter"/>
</dbReference>
<dbReference type="GO" id="GO:0005886">
    <property type="term" value="C:plasma membrane"/>
    <property type="evidence" value="ECO:0007669"/>
    <property type="project" value="UniProtKB-SubCell"/>
</dbReference>
<dbReference type="GO" id="GO:0050136">
    <property type="term" value="F:NADH:ubiquinone reductase (non-electrogenic) activity"/>
    <property type="evidence" value="ECO:0007669"/>
    <property type="project" value="UniProtKB-UniRule"/>
</dbReference>
<dbReference type="GO" id="GO:0048038">
    <property type="term" value="F:quinone binding"/>
    <property type="evidence" value="ECO:0007669"/>
    <property type="project" value="UniProtKB-KW"/>
</dbReference>
<dbReference type="GO" id="GO:0042773">
    <property type="term" value="P:ATP synthesis coupled electron transport"/>
    <property type="evidence" value="ECO:0007669"/>
    <property type="project" value="InterPro"/>
</dbReference>
<dbReference type="FunFam" id="1.10.287.3510:FF:000001">
    <property type="entry name" value="NADH-quinone oxidoreductase subunit K"/>
    <property type="match status" value="1"/>
</dbReference>
<dbReference type="Gene3D" id="1.10.287.3510">
    <property type="match status" value="1"/>
</dbReference>
<dbReference type="HAMAP" id="MF_01456">
    <property type="entry name" value="NDH1_NuoK"/>
    <property type="match status" value="1"/>
</dbReference>
<dbReference type="InterPro" id="IPR001133">
    <property type="entry name" value="NADH_UbQ_OxRdtase_chain4L/K"/>
</dbReference>
<dbReference type="InterPro" id="IPR039428">
    <property type="entry name" value="NUOK/Mnh_C1-like"/>
</dbReference>
<dbReference type="NCBIfam" id="NF004320">
    <property type="entry name" value="PRK05715.1-2"/>
    <property type="match status" value="1"/>
</dbReference>
<dbReference type="NCBIfam" id="NF004321">
    <property type="entry name" value="PRK05715.1-3"/>
    <property type="match status" value="1"/>
</dbReference>
<dbReference type="NCBIfam" id="NF004323">
    <property type="entry name" value="PRK05715.1-5"/>
    <property type="match status" value="1"/>
</dbReference>
<dbReference type="PANTHER" id="PTHR11434:SF21">
    <property type="entry name" value="NADH DEHYDROGENASE SUBUNIT 4L-RELATED"/>
    <property type="match status" value="1"/>
</dbReference>
<dbReference type="PANTHER" id="PTHR11434">
    <property type="entry name" value="NADH-UBIQUINONE OXIDOREDUCTASE SUBUNIT ND4L"/>
    <property type="match status" value="1"/>
</dbReference>
<dbReference type="Pfam" id="PF00420">
    <property type="entry name" value="Oxidored_q2"/>
    <property type="match status" value="1"/>
</dbReference>
<name>NUOK_BURM1</name>
<evidence type="ECO:0000255" key="1">
    <source>
        <dbReference type="HAMAP-Rule" id="MF_01456"/>
    </source>
</evidence>